<reference key="1">
    <citation type="submission" date="2008-02" db="EMBL/GenBank/DDBJ databases">
        <title>Complete sequence of Yersinia pseudotuberculosis YPIII.</title>
        <authorList>
            <consortium name="US DOE Joint Genome Institute"/>
            <person name="Copeland A."/>
            <person name="Lucas S."/>
            <person name="Lapidus A."/>
            <person name="Glavina del Rio T."/>
            <person name="Dalin E."/>
            <person name="Tice H."/>
            <person name="Bruce D."/>
            <person name="Goodwin L."/>
            <person name="Pitluck S."/>
            <person name="Munk A.C."/>
            <person name="Brettin T."/>
            <person name="Detter J.C."/>
            <person name="Han C."/>
            <person name="Tapia R."/>
            <person name="Schmutz J."/>
            <person name="Larimer F."/>
            <person name="Land M."/>
            <person name="Hauser L."/>
            <person name="Challacombe J.F."/>
            <person name="Green L."/>
            <person name="Lindler L.E."/>
            <person name="Nikolich M.P."/>
            <person name="Richardson P."/>
        </authorList>
    </citation>
    <scope>NUCLEOTIDE SEQUENCE [LARGE SCALE GENOMIC DNA]</scope>
    <source>
        <strain>YPIII</strain>
    </source>
</reference>
<accession>B1JRM8</accession>
<protein>
    <recommendedName>
        <fullName evidence="1">ATP synthase subunit b</fullName>
    </recommendedName>
    <alternativeName>
        <fullName evidence="1">ATP synthase F(0) sector subunit b</fullName>
    </alternativeName>
    <alternativeName>
        <fullName evidence="1">ATPase subunit I</fullName>
    </alternativeName>
    <alternativeName>
        <fullName evidence="1">F-type ATPase subunit b</fullName>
        <shortName evidence="1">F-ATPase subunit b</shortName>
    </alternativeName>
</protein>
<keyword id="KW-0066">ATP synthesis</keyword>
<keyword id="KW-0997">Cell inner membrane</keyword>
<keyword id="KW-1003">Cell membrane</keyword>
<keyword id="KW-0138">CF(0)</keyword>
<keyword id="KW-0375">Hydrogen ion transport</keyword>
<keyword id="KW-0406">Ion transport</keyword>
<keyword id="KW-0472">Membrane</keyword>
<keyword id="KW-0812">Transmembrane</keyword>
<keyword id="KW-1133">Transmembrane helix</keyword>
<keyword id="KW-0813">Transport</keyword>
<evidence type="ECO:0000255" key="1">
    <source>
        <dbReference type="HAMAP-Rule" id="MF_01398"/>
    </source>
</evidence>
<feature type="chain" id="PRO_0000368885" description="ATP synthase subunit b">
    <location>
        <begin position="1"/>
        <end position="156"/>
    </location>
</feature>
<feature type="transmembrane region" description="Helical" evidence="1">
    <location>
        <begin position="11"/>
        <end position="31"/>
    </location>
</feature>
<gene>
    <name evidence="1" type="primary">atpF</name>
    <name type="ordered locus">YPK_4222</name>
</gene>
<dbReference type="EMBL" id="CP000950">
    <property type="protein sequence ID" value="ACA70478.1"/>
    <property type="molecule type" value="Genomic_DNA"/>
</dbReference>
<dbReference type="RefSeq" id="WP_002220762.1">
    <property type="nucleotide sequence ID" value="NZ_CP009792.1"/>
</dbReference>
<dbReference type="SMR" id="B1JRM8"/>
<dbReference type="GeneID" id="57974599"/>
<dbReference type="KEGG" id="ypy:YPK_4222"/>
<dbReference type="PATRIC" id="fig|502800.11.peg.572"/>
<dbReference type="GO" id="GO:0005886">
    <property type="term" value="C:plasma membrane"/>
    <property type="evidence" value="ECO:0007669"/>
    <property type="project" value="UniProtKB-SubCell"/>
</dbReference>
<dbReference type="GO" id="GO:0045259">
    <property type="term" value="C:proton-transporting ATP synthase complex"/>
    <property type="evidence" value="ECO:0007669"/>
    <property type="project" value="UniProtKB-KW"/>
</dbReference>
<dbReference type="GO" id="GO:0046933">
    <property type="term" value="F:proton-transporting ATP synthase activity, rotational mechanism"/>
    <property type="evidence" value="ECO:0007669"/>
    <property type="project" value="UniProtKB-UniRule"/>
</dbReference>
<dbReference type="GO" id="GO:0046961">
    <property type="term" value="F:proton-transporting ATPase activity, rotational mechanism"/>
    <property type="evidence" value="ECO:0007669"/>
    <property type="project" value="TreeGrafter"/>
</dbReference>
<dbReference type="CDD" id="cd06503">
    <property type="entry name" value="ATP-synt_Fo_b"/>
    <property type="match status" value="1"/>
</dbReference>
<dbReference type="FunFam" id="1.20.5.620:FF:000001">
    <property type="entry name" value="ATP synthase subunit b"/>
    <property type="match status" value="1"/>
</dbReference>
<dbReference type="Gene3D" id="1.20.5.620">
    <property type="entry name" value="F1F0 ATP synthase subunit B, membrane domain"/>
    <property type="match status" value="1"/>
</dbReference>
<dbReference type="HAMAP" id="MF_01398">
    <property type="entry name" value="ATP_synth_b_bprime"/>
    <property type="match status" value="1"/>
</dbReference>
<dbReference type="InterPro" id="IPR028987">
    <property type="entry name" value="ATP_synth_B-like_membr_sf"/>
</dbReference>
<dbReference type="InterPro" id="IPR002146">
    <property type="entry name" value="ATP_synth_b/b'su_bac/chlpt"/>
</dbReference>
<dbReference type="InterPro" id="IPR005864">
    <property type="entry name" value="ATP_synth_F0_bsu_bac"/>
</dbReference>
<dbReference type="InterPro" id="IPR050059">
    <property type="entry name" value="ATP_synthase_B_chain"/>
</dbReference>
<dbReference type="NCBIfam" id="TIGR01144">
    <property type="entry name" value="ATP_synt_b"/>
    <property type="match status" value="1"/>
</dbReference>
<dbReference type="NCBIfam" id="NF004411">
    <property type="entry name" value="PRK05759.1-2"/>
    <property type="match status" value="1"/>
</dbReference>
<dbReference type="NCBIfam" id="NF004413">
    <property type="entry name" value="PRK05759.1-4"/>
    <property type="match status" value="1"/>
</dbReference>
<dbReference type="PANTHER" id="PTHR33445:SF1">
    <property type="entry name" value="ATP SYNTHASE SUBUNIT B"/>
    <property type="match status" value="1"/>
</dbReference>
<dbReference type="PANTHER" id="PTHR33445">
    <property type="entry name" value="ATP SYNTHASE SUBUNIT B', CHLOROPLASTIC"/>
    <property type="match status" value="1"/>
</dbReference>
<dbReference type="Pfam" id="PF00430">
    <property type="entry name" value="ATP-synt_B"/>
    <property type="match status" value="1"/>
</dbReference>
<dbReference type="SUPFAM" id="SSF81573">
    <property type="entry name" value="F1F0 ATP synthase subunit B, membrane domain"/>
    <property type="match status" value="1"/>
</dbReference>
<organism>
    <name type="scientific">Yersinia pseudotuberculosis serotype O:3 (strain YPIII)</name>
    <dbReference type="NCBI Taxonomy" id="502800"/>
    <lineage>
        <taxon>Bacteria</taxon>
        <taxon>Pseudomonadati</taxon>
        <taxon>Pseudomonadota</taxon>
        <taxon>Gammaproteobacteria</taxon>
        <taxon>Enterobacterales</taxon>
        <taxon>Yersiniaceae</taxon>
        <taxon>Yersinia</taxon>
    </lineage>
</organism>
<proteinExistence type="inferred from homology"/>
<sequence>MNLNATILGQAIAFVLFVIFCMKYVWPPIMAAIEKRQQEIADGLSSAERAKKDLDLAQANATDQLKKAKAEAQVIIEQASKRKAQILDEAKAEAEQERNKIVAQAQAEIDAERKRAREELRKQVAMLAIAGAEKIIERSVDEAANSDIVDKLVAEL</sequence>
<comment type="function">
    <text evidence="1">F(1)F(0) ATP synthase produces ATP from ADP in the presence of a proton or sodium gradient. F-type ATPases consist of two structural domains, F(1) containing the extramembraneous catalytic core and F(0) containing the membrane proton channel, linked together by a central stalk and a peripheral stalk. During catalysis, ATP synthesis in the catalytic domain of F(1) is coupled via a rotary mechanism of the central stalk subunits to proton translocation.</text>
</comment>
<comment type="function">
    <text evidence="1">Component of the F(0) channel, it forms part of the peripheral stalk, linking F(1) to F(0).</text>
</comment>
<comment type="subunit">
    <text evidence="1">F-type ATPases have 2 components, F(1) - the catalytic core - and F(0) - the membrane proton channel. F(1) has five subunits: alpha(3), beta(3), gamma(1), delta(1), epsilon(1). F(0) has three main subunits: a(1), b(2) and c(10-14). The alpha and beta chains form an alternating ring which encloses part of the gamma chain. F(1) is attached to F(0) by a central stalk formed by the gamma and epsilon chains, while a peripheral stalk is formed by the delta and b chains.</text>
</comment>
<comment type="subcellular location">
    <subcellularLocation>
        <location evidence="1">Cell inner membrane</location>
        <topology evidence="1">Single-pass membrane protein</topology>
    </subcellularLocation>
</comment>
<comment type="similarity">
    <text evidence="1">Belongs to the ATPase B chain family.</text>
</comment>
<name>ATPF_YERPY</name>